<proteinExistence type="evidence at transcript level"/>
<evidence type="ECO:0000250" key="1">
    <source>
        <dbReference type="UniProtKB" id="P59016"/>
    </source>
</evidence>
<evidence type="ECO:0000250" key="2">
    <source>
        <dbReference type="UniProtKB" id="Q9H267"/>
    </source>
</evidence>
<evidence type="ECO:0000255" key="3"/>
<evidence type="ECO:0000269" key="4">
    <source>
    </source>
</evidence>
<evidence type="ECO:0000269" key="5">
    <source>
    </source>
</evidence>
<evidence type="ECO:0000305" key="6"/>
<evidence type="ECO:0000312" key="7">
    <source>
        <dbReference type="EMBL" id="AAH91824.1"/>
    </source>
</evidence>
<evidence type="ECO:0000312" key="8">
    <source>
        <dbReference type="EMBL" id="ABB59728.1"/>
    </source>
</evidence>
<evidence type="ECO:0000312" key="9">
    <source>
        <dbReference type="ZFIN" id="ZDB-GENE-050327-73"/>
    </source>
</evidence>
<feature type="chain" id="PRO_0000395315" description="Vacuolar protein sorting-associated protein 33B">
    <location>
        <begin position="1"/>
        <end position="617"/>
    </location>
</feature>
<name>VP33B_DANRE</name>
<comment type="function">
    <text evidence="1 2 4 5">May play a role in vesicle-mediated protein trafficking to lysosomal compartments and in membrane docking/fusion reactions of late endosomes/lysosomes. Required for proper trafficking and targeting of the collagen-modifying enzyme lysyl hydroxylase 3 (LH3) to intracellular collagen (By similarity). Mediates phagolysosomal fusion in macrophages. Proposed to be involved in endosomal maturation implicating vipas39. In epithelial cells, the vps33b:vipas39 complex may play a role in the apical recycling pathway and in the maintenance of the apical-basolateral polarity (By similarity). Plays a role in bile duct development.</text>
</comment>
<comment type="subunit">
    <text evidence="1 2">Interacts with vipas39.</text>
</comment>
<comment type="subcellular location">
    <subcellularLocation>
        <location evidence="2">Late endosome membrane</location>
        <topology evidence="2">Peripheral membrane protein</topology>
        <orientation evidence="2">Cytoplasmic side</orientation>
    </subcellularLocation>
    <subcellularLocation>
        <location evidence="2">Lysosome membrane</location>
        <topology evidence="2">Peripheral membrane protein</topology>
        <orientation evidence="2">Cytoplasmic side</orientation>
    </subcellularLocation>
    <text evidence="2">Cytoplasmic, peripheral membrane protein associated with late endosomes/lysosomes.</text>
</comment>
<comment type="tissue specificity">
    <text evidence="4 5">Widely expressed from 4 hours post-fertilization (hpf) to 24 hpf. At 48 hpf, localized to brain, retina, ear, liver and proximal intestine. This expression pattern is more pronounced at 72 hpf and persists through 5 days post-fertilization (dpf). At 3 dpf and 4 dpf, expression in the liver is predominantly in developing biliary epithelial cells. No expression detected in kidney or spinal cord.</text>
</comment>
<comment type="similarity">
    <text evidence="3">Belongs to the STXBP/unc-18/SEC1 family.</text>
</comment>
<protein>
    <recommendedName>
        <fullName evidence="2">Vacuolar protein sorting-associated protein 33B</fullName>
    </recommendedName>
</protein>
<dbReference type="EMBL" id="DQ230986">
    <property type="protein sequence ID" value="ABB59728.1"/>
    <property type="molecule type" value="mRNA"/>
</dbReference>
<dbReference type="EMBL" id="CR382298">
    <property type="status" value="NOT_ANNOTATED_CDS"/>
    <property type="molecule type" value="Genomic_DNA"/>
</dbReference>
<dbReference type="EMBL" id="BC091824">
    <property type="protein sequence ID" value="AAH91824.1"/>
    <property type="molecule type" value="mRNA"/>
</dbReference>
<dbReference type="RefSeq" id="NP_001014370.1">
    <property type="nucleotide sequence ID" value="NM_001014348.1"/>
</dbReference>
<dbReference type="SMR" id="Q58EN8"/>
<dbReference type="FunCoup" id="Q58EN8">
    <property type="interactions" value="1121"/>
</dbReference>
<dbReference type="STRING" id="7955.ENSDARP00000065867"/>
<dbReference type="PaxDb" id="7955-ENSDARP00000065867"/>
<dbReference type="GeneID" id="541534"/>
<dbReference type="KEGG" id="dre:541534"/>
<dbReference type="AGR" id="ZFIN:ZDB-GENE-050327-73"/>
<dbReference type="CTD" id="26276"/>
<dbReference type="ZFIN" id="ZDB-GENE-050327-73">
    <property type="gene designation" value="vps33b"/>
</dbReference>
<dbReference type="eggNOG" id="KOG1302">
    <property type="taxonomic scope" value="Eukaryota"/>
</dbReference>
<dbReference type="InParanoid" id="Q58EN8"/>
<dbReference type="OrthoDB" id="10262528at2759"/>
<dbReference type="PhylomeDB" id="Q58EN8"/>
<dbReference type="PRO" id="PR:Q58EN8"/>
<dbReference type="Proteomes" id="UP000000437">
    <property type="component" value="Chromosome 7"/>
</dbReference>
<dbReference type="GO" id="GO:0033263">
    <property type="term" value="C:CORVET complex"/>
    <property type="evidence" value="ECO:0000318"/>
    <property type="project" value="GO_Central"/>
</dbReference>
<dbReference type="GO" id="GO:0031902">
    <property type="term" value="C:late endosome membrane"/>
    <property type="evidence" value="ECO:0007669"/>
    <property type="project" value="UniProtKB-SubCell"/>
</dbReference>
<dbReference type="GO" id="GO:0005765">
    <property type="term" value="C:lysosomal membrane"/>
    <property type="evidence" value="ECO:0007669"/>
    <property type="project" value="UniProtKB-SubCell"/>
</dbReference>
<dbReference type="GO" id="GO:0005764">
    <property type="term" value="C:lysosome"/>
    <property type="evidence" value="ECO:0000318"/>
    <property type="project" value="GO_Central"/>
</dbReference>
<dbReference type="GO" id="GO:0006886">
    <property type="term" value="P:intracellular protein transport"/>
    <property type="evidence" value="ECO:0000318"/>
    <property type="project" value="GO_Central"/>
</dbReference>
<dbReference type="GO" id="GO:0035622">
    <property type="term" value="P:intrahepatic bile duct development"/>
    <property type="evidence" value="ECO:0000315"/>
    <property type="project" value="ZFIN"/>
</dbReference>
<dbReference type="GO" id="GO:0016192">
    <property type="term" value="P:vesicle-mediated transport"/>
    <property type="evidence" value="ECO:0000318"/>
    <property type="project" value="GO_Central"/>
</dbReference>
<dbReference type="FunFam" id="1.25.40.850:FF:000001">
    <property type="entry name" value="vacuolar protein sorting-associated protein 33B isoform X1"/>
    <property type="match status" value="1"/>
</dbReference>
<dbReference type="FunFam" id="3.40.50.2060:FF:000005">
    <property type="entry name" value="vacuolar protein sorting-associated protein 33B isoform X1"/>
    <property type="match status" value="1"/>
</dbReference>
<dbReference type="FunFam" id="3.90.830.10:FF:000004">
    <property type="entry name" value="vacuolar protein sorting-associated protein 33B isoform X1"/>
    <property type="match status" value="1"/>
</dbReference>
<dbReference type="Gene3D" id="1.25.40.850">
    <property type="match status" value="1"/>
</dbReference>
<dbReference type="Gene3D" id="3.40.50.1910">
    <property type="match status" value="2"/>
</dbReference>
<dbReference type="Gene3D" id="3.40.50.2060">
    <property type="match status" value="1"/>
</dbReference>
<dbReference type="Gene3D" id="3.90.830.10">
    <property type="entry name" value="Syntaxin Binding Protein 1, Chain A, domain 2"/>
    <property type="match status" value="1"/>
</dbReference>
<dbReference type="InterPro" id="IPR043154">
    <property type="entry name" value="Sec-1-like_dom1"/>
</dbReference>
<dbReference type="InterPro" id="IPR043127">
    <property type="entry name" value="Sec-1-like_dom3a"/>
</dbReference>
<dbReference type="InterPro" id="IPR001619">
    <property type="entry name" value="Sec1-like"/>
</dbReference>
<dbReference type="InterPro" id="IPR027482">
    <property type="entry name" value="Sec1-like_dom2"/>
</dbReference>
<dbReference type="InterPro" id="IPR036045">
    <property type="entry name" value="Sec1-like_sf"/>
</dbReference>
<dbReference type="InterPro" id="IPR043155">
    <property type="entry name" value="VPS33_dom3b"/>
</dbReference>
<dbReference type="PANTHER" id="PTHR11679">
    <property type="entry name" value="VESICLE PROTEIN SORTING-ASSOCIATED"/>
    <property type="match status" value="1"/>
</dbReference>
<dbReference type="Pfam" id="PF00995">
    <property type="entry name" value="Sec1"/>
    <property type="match status" value="1"/>
</dbReference>
<dbReference type="SUPFAM" id="SSF56815">
    <property type="entry name" value="Sec1/munc18-like (SM) proteins"/>
    <property type="match status" value="1"/>
</dbReference>
<sequence length="617" mass="70429">MAQTERRDAPELPDFSLLKRLARDQLIFLLEQLPGKKDLFIDADLMSPLDRIANVTILKQHEVDKLYKVELKPIVSSSDQLCFLIRPRIQTVKWISDLVNSDKVAGRFRRYKIIFTPQKFYACETVLEEQGVYGDVTTDEWNFYILPLDDDILSLELPEFFRDNFLEGDQRWVTTGGGALHLLQSVYGSFSKVYGIGRCAKMVYESWRELMEEGEQRTRQPEFAKVFLIDRDVDFVTPLCSQVVYEGLVDDIFRIKCSSVEFGPDVTSSDKSIKVMLNSQDKVFNEIRNEHFSNVFGFLSQKAKNLQTAYDKRRGMDIQQMKAFVADELKGLKQEHRLLSLHIGASESIMKKKTKQDFQELLKTEHSLLEGFEIRECIAYIEEHINRQVSMIDSLRLLCLLSITENGLLSKDYRSLKAQYLQSYGIEHLLTFANLRQLGLLEEQQTGETLTVMESKVGKLVNDKTAGKLTDAFSSLAKKSNFRALSKRLALVPKSGEEYDLRVPRDMAYIFSGAYIPLSCKLIEQVLERDGWTGLEEVTRMLNGQDFAVTGGSSSSEARNKSNGQRIILVMFLGGCTYSEISALRFLGKERGCRFIVLTTAITNSGRLLEALLDKHV</sequence>
<gene>
    <name evidence="9" type="primary">vps33b</name>
</gene>
<accession>Q58EN8</accession>
<keyword id="KW-0217">Developmental protein</keyword>
<keyword id="KW-0967">Endosome</keyword>
<keyword id="KW-0458">Lysosome</keyword>
<keyword id="KW-0472">Membrane</keyword>
<keyword id="KW-0653">Protein transport</keyword>
<keyword id="KW-1185">Reference proteome</keyword>
<keyword id="KW-0813">Transport</keyword>
<reference evidence="6 8" key="1">
    <citation type="journal article" date="2005" name="Development">
        <title>Zebrafish vps33b, an ortholog of the gene responsible for human arthrogryposis-renal dysfunction-cholestasis syndrome, regulates biliary development downstream of the onecut transcription factor hnf6.</title>
        <authorList>
            <person name="Matthews R.P."/>
            <person name="Plumb-Rudewiez N."/>
            <person name="Lorent K."/>
            <person name="Gissen P."/>
            <person name="Johnson C.A."/>
            <person name="Lemaigre F."/>
            <person name="Pack M."/>
        </authorList>
    </citation>
    <scope>NUCLEOTIDE SEQUENCE [MRNA]</scope>
    <scope>FUNCTION</scope>
    <scope>TISSUE SPECIFICITY</scope>
</reference>
<reference key="2">
    <citation type="journal article" date="2013" name="Nature">
        <title>The zebrafish reference genome sequence and its relationship to the human genome.</title>
        <authorList>
            <person name="Howe K."/>
            <person name="Clark M.D."/>
            <person name="Torroja C.F."/>
            <person name="Torrance J."/>
            <person name="Berthelot C."/>
            <person name="Muffato M."/>
            <person name="Collins J.E."/>
            <person name="Humphray S."/>
            <person name="McLaren K."/>
            <person name="Matthews L."/>
            <person name="McLaren S."/>
            <person name="Sealy I."/>
            <person name="Caccamo M."/>
            <person name="Churcher C."/>
            <person name="Scott C."/>
            <person name="Barrett J.C."/>
            <person name="Koch R."/>
            <person name="Rauch G.J."/>
            <person name="White S."/>
            <person name="Chow W."/>
            <person name="Kilian B."/>
            <person name="Quintais L.T."/>
            <person name="Guerra-Assuncao J.A."/>
            <person name="Zhou Y."/>
            <person name="Gu Y."/>
            <person name="Yen J."/>
            <person name="Vogel J.H."/>
            <person name="Eyre T."/>
            <person name="Redmond S."/>
            <person name="Banerjee R."/>
            <person name="Chi J."/>
            <person name="Fu B."/>
            <person name="Langley E."/>
            <person name="Maguire S.F."/>
            <person name="Laird G.K."/>
            <person name="Lloyd D."/>
            <person name="Kenyon E."/>
            <person name="Donaldson S."/>
            <person name="Sehra H."/>
            <person name="Almeida-King J."/>
            <person name="Loveland J."/>
            <person name="Trevanion S."/>
            <person name="Jones M."/>
            <person name="Quail M."/>
            <person name="Willey D."/>
            <person name="Hunt A."/>
            <person name="Burton J."/>
            <person name="Sims S."/>
            <person name="McLay K."/>
            <person name="Plumb B."/>
            <person name="Davis J."/>
            <person name="Clee C."/>
            <person name="Oliver K."/>
            <person name="Clark R."/>
            <person name="Riddle C."/>
            <person name="Elliot D."/>
            <person name="Threadgold G."/>
            <person name="Harden G."/>
            <person name="Ware D."/>
            <person name="Begum S."/>
            <person name="Mortimore B."/>
            <person name="Kerry G."/>
            <person name="Heath P."/>
            <person name="Phillimore B."/>
            <person name="Tracey A."/>
            <person name="Corby N."/>
            <person name="Dunn M."/>
            <person name="Johnson C."/>
            <person name="Wood J."/>
            <person name="Clark S."/>
            <person name="Pelan S."/>
            <person name="Griffiths G."/>
            <person name="Smith M."/>
            <person name="Glithero R."/>
            <person name="Howden P."/>
            <person name="Barker N."/>
            <person name="Lloyd C."/>
            <person name="Stevens C."/>
            <person name="Harley J."/>
            <person name="Holt K."/>
            <person name="Panagiotidis G."/>
            <person name="Lovell J."/>
            <person name="Beasley H."/>
            <person name="Henderson C."/>
            <person name="Gordon D."/>
            <person name="Auger K."/>
            <person name="Wright D."/>
            <person name="Collins J."/>
            <person name="Raisen C."/>
            <person name="Dyer L."/>
            <person name="Leung K."/>
            <person name="Robertson L."/>
            <person name="Ambridge K."/>
            <person name="Leongamornlert D."/>
            <person name="McGuire S."/>
            <person name="Gilderthorp R."/>
            <person name="Griffiths C."/>
            <person name="Manthravadi D."/>
            <person name="Nichol S."/>
            <person name="Barker G."/>
            <person name="Whitehead S."/>
            <person name="Kay M."/>
            <person name="Brown J."/>
            <person name="Murnane C."/>
            <person name="Gray E."/>
            <person name="Humphries M."/>
            <person name="Sycamore N."/>
            <person name="Barker D."/>
            <person name="Saunders D."/>
            <person name="Wallis J."/>
            <person name="Babbage A."/>
            <person name="Hammond S."/>
            <person name="Mashreghi-Mohammadi M."/>
            <person name="Barr L."/>
            <person name="Martin S."/>
            <person name="Wray P."/>
            <person name="Ellington A."/>
            <person name="Matthews N."/>
            <person name="Ellwood M."/>
            <person name="Woodmansey R."/>
            <person name="Clark G."/>
            <person name="Cooper J."/>
            <person name="Tromans A."/>
            <person name="Grafham D."/>
            <person name="Skuce C."/>
            <person name="Pandian R."/>
            <person name="Andrews R."/>
            <person name="Harrison E."/>
            <person name="Kimberley A."/>
            <person name="Garnett J."/>
            <person name="Fosker N."/>
            <person name="Hall R."/>
            <person name="Garner P."/>
            <person name="Kelly D."/>
            <person name="Bird C."/>
            <person name="Palmer S."/>
            <person name="Gehring I."/>
            <person name="Berger A."/>
            <person name="Dooley C.M."/>
            <person name="Ersan-Urun Z."/>
            <person name="Eser C."/>
            <person name="Geiger H."/>
            <person name="Geisler M."/>
            <person name="Karotki L."/>
            <person name="Kirn A."/>
            <person name="Konantz J."/>
            <person name="Konantz M."/>
            <person name="Oberlander M."/>
            <person name="Rudolph-Geiger S."/>
            <person name="Teucke M."/>
            <person name="Lanz C."/>
            <person name="Raddatz G."/>
            <person name="Osoegawa K."/>
            <person name="Zhu B."/>
            <person name="Rapp A."/>
            <person name="Widaa S."/>
            <person name="Langford C."/>
            <person name="Yang F."/>
            <person name="Schuster S.C."/>
            <person name="Carter N.P."/>
            <person name="Harrow J."/>
            <person name="Ning Z."/>
            <person name="Herrero J."/>
            <person name="Searle S.M."/>
            <person name="Enright A."/>
            <person name="Geisler R."/>
            <person name="Plasterk R.H."/>
            <person name="Lee C."/>
            <person name="Westerfield M."/>
            <person name="de Jong P.J."/>
            <person name="Zon L.I."/>
            <person name="Postlethwait J.H."/>
            <person name="Nusslein-Volhard C."/>
            <person name="Hubbard T.J."/>
            <person name="Roest Crollius H."/>
            <person name="Rogers J."/>
            <person name="Stemple D.L."/>
        </authorList>
    </citation>
    <scope>NUCLEOTIDE SEQUENCE [LARGE SCALE GENOMIC DNA]</scope>
    <source>
        <strain>Tuebingen</strain>
    </source>
</reference>
<reference evidence="6 7" key="3">
    <citation type="submission" date="2005-03" db="EMBL/GenBank/DDBJ databases">
        <authorList>
            <consortium name="NIH - Zebrafish Gene Collection (ZGC) project"/>
        </authorList>
    </citation>
    <scope>NUCLEOTIDE SEQUENCE [LARGE SCALE MRNA]</scope>
    <source>
        <tissue evidence="7">Embryo</tissue>
    </source>
</reference>
<reference evidence="6" key="4">
    <citation type="journal article" date="2010" name="Nat. Genet.">
        <title>Mutations in VIPAR cause an arthrogryposis, renal dysfunction and cholestasis syndrome phenotype with defects in epithelial polarization.</title>
        <authorList>
            <person name="Cullinane A.R."/>
            <person name="Straatman-Iwanowska A."/>
            <person name="Zaucker A."/>
            <person name="Wakabayashi Y."/>
            <person name="Bruce C.K."/>
            <person name="Luo G."/>
            <person name="Rahman F."/>
            <person name="Gurakan F."/>
            <person name="Utine E."/>
            <person name="Ozkan T.B."/>
            <person name="Denecke J."/>
            <person name="Vukovic J."/>
            <person name="Di Rocco M."/>
            <person name="Mandel H."/>
            <person name="Cangul H."/>
            <person name="Matthews R.P."/>
            <person name="Thomas S.G."/>
            <person name="Rappoport J.Z."/>
            <person name="Arias I.M."/>
            <person name="Wolburg H."/>
            <person name="Knisely A.S."/>
            <person name="Kelly D.A."/>
            <person name="Muller F."/>
            <person name="Maher E.R."/>
            <person name="Gissen P."/>
        </authorList>
    </citation>
    <scope>FUNCTION</scope>
</reference>
<organism>
    <name type="scientific">Danio rerio</name>
    <name type="common">Zebrafish</name>
    <name type="synonym">Brachydanio rerio</name>
    <dbReference type="NCBI Taxonomy" id="7955"/>
    <lineage>
        <taxon>Eukaryota</taxon>
        <taxon>Metazoa</taxon>
        <taxon>Chordata</taxon>
        <taxon>Craniata</taxon>
        <taxon>Vertebrata</taxon>
        <taxon>Euteleostomi</taxon>
        <taxon>Actinopterygii</taxon>
        <taxon>Neopterygii</taxon>
        <taxon>Teleostei</taxon>
        <taxon>Ostariophysi</taxon>
        <taxon>Cypriniformes</taxon>
        <taxon>Danionidae</taxon>
        <taxon>Danioninae</taxon>
        <taxon>Danio</taxon>
    </lineage>
</organism>